<reference key="1">
    <citation type="journal article" date="1998" name="Nature">
        <title>The complete genome of the hyperthermophilic bacterium Aquifex aeolicus.</title>
        <authorList>
            <person name="Deckert G."/>
            <person name="Warren P.V."/>
            <person name="Gaasterland T."/>
            <person name="Young W.G."/>
            <person name="Lenox A.L."/>
            <person name="Graham D.E."/>
            <person name="Overbeek R."/>
            <person name="Snead M.A."/>
            <person name="Keller M."/>
            <person name="Aujay M."/>
            <person name="Huber R."/>
            <person name="Feldman R.A."/>
            <person name="Short J.M."/>
            <person name="Olsen G.J."/>
            <person name="Swanson R.V."/>
        </authorList>
    </citation>
    <scope>NUCLEOTIDE SEQUENCE [LARGE SCALE GENOMIC DNA]</scope>
    <source>
        <strain>VF5</strain>
    </source>
</reference>
<gene>
    <name type="primary">malQ</name>
    <name type="synonym">malM</name>
    <name type="ordered locus">aq_723</name>
</gene>
<comment type="catalytic activity">
    <reaction>
        <text>Transfers a segment of a (1-&gt;4)-alpha-D-glucan to a new position in an acceptor, which may be glucose or a (1-&gt;4)-alpha-D-glucan.</text>
        <dbReference type="EC" id="2.4.1.25"/>
    </reaction>
</comment>
<comment type="subcellular location">
    <subcellularLocation>
        <location evidence="1">Cytoplasm</location>
    </subcellularLocation>
</comment>
<comment type="similarity">
    <text evidence="2">Belongs to the disproportionating enzyme family.</text>
</comment>
<keyword id="KW-0002">3D-structure</keyword>
<keyword id="KW-0119">Carbohydrate metabolism</keyword>
<keyword id="KW-0963">Cytoplasm</keyword>
<keyword id="KW-0328">Glycosyltransferase</keyword>
<keyword id="KW-1185">Reference proteome</keyword>
<keyword id="KW-0808">Transferase</keyword>
<name>MALQ_AQUAE</name>
<proteinExistence type="evidence at protein level"/>
<protein>
    <recommendedName>
        <fullName>4-alpha-glucanotransferase</fullName>
        <ecNumber>2.4.1.25</ecNumber>
    </recommendedName>
    <alternativeName>
        <fullName>Amylomaltase</fullName>
    </alternativeName>
    <alternativeName>
        <fullName>Disproportionating enzyme</fullName>
        <shortName>D-enzyme</shortName>
    </alternativeName>
</protein>
<dbReference type="EC" id="2.4.1.25"/>
<dbReference type="EMBL" id="AE000657">
    <property type="protein sequence ID" value="AAC06897.1"/>
    <property type="molecule type" value="Genomic_DNA"/>
</dbReference>
<dbReference type="PIR" id="E70363">
    <property type="entry name" value="E70363"/>
</dbReference>
<dbReference type="RefSeq" id="NP_213497.1">
    <property type="nucleotide sequence ID" value="NC_000918.1"/>
</dbReference>
<dbReference type="RefSeq" id="WP_010880435.1">
    <property type="nucleotide sequence ID" value="NC_000918.1"/>
</dbReference>
<dbReference type="PDB" id="1TZ7">
    <property type="method" value="X-ray"/>
    <property type="resolution" value="2.15 A"/>
    <property type="chains" value="A/B=1-485"/>
</dbReference>
<dbReference type="PDBsum" id="1TZ7"/>
<dbReference type="SMR" id="O66937"/>
<dbReference type="FunCoup" id="O66937">
    <property type="interactions" value="177"/>
</dbReference>
<dbReference type="STRING" id="224324.aq_723"/>
<dbReference type="CAZy" id="GH77">
    <property type="family name" value="Glycoside Hydrolase Family 77"/>
</dbReference>
<dbReference type="EnsemblBacteria" id="AAC06897">
    <property type="protein sequence ID" value="AAC06897"/>
    <property type="gene ID" value="aq_723"/>
</dbReference>
<dbReference type="KEGG" id="aae:aq_723"/>
<dbReference type="PATRIC" id="fig|224324.8.peg.580"/>
<dbReference type="eggNOG" id="COG1640">
    <property type="taxonomic scope" value="Bacteria"/>
</dbReference>
<dbReference type="HOGENOM" id="CLU_014132_1_0_0"/>
<dbReference type="InParanoid" id="O66937"/>
<dbReference type="OrthoDB" id="9811841at2"/>
<dbReference type="BRENDA" id="2.4.1.25">
    <property type="organism ID" value="396"/>
</dbReference>
<dbReference type="EvolutionaryTrace" id="O66937"/>
<dbReference type="Proteomes" id="UP000000798">
    <property type="component" value="Chromosome"/>
</dbReference>
<dbReference type="GO" id="GO:0005737">
    <property type="term" value="C:cytoplasm"/>
    <property type="evidence" value="ECO:0007669"/>
    <property type="project" value="UniProtKB-SubCell"/>
</dbReference>
<dbReference type="GO" id="GO:0004134">
    <property type="term" value="F:4-alpha-glucanotransferase activity"/>
    <property type="evidence" value="ECO:0007669"/>
    <property type="project" value="UniProtKB-EC"/>
</dbReference>
<dbReference type="GO" id="GO:0005975">
    <property type="term" value="P:carbohydrate metabolic process"/>
    <property type="evidence" value="ECO:0007669"/>
    <property type="project" value="InterPro"/>
</dbReference>
<dbReference type="Gene3D" id="3.20.20.80">
    <property type="entry name" value="Glycosidases"/>
    <property type="match status" value="1"/>
</dbReference>
<dbReference type="InterPro" id="IPR003385">
    <property type="entry name" value="Glyco_hydro_77"/>
</dbReference>
<dbReference type="InterPro" id="IPR017853">
    <property type="entry name" value="Glycoside_hydrolase_SF"/>
</dbReference>
<dbReference type="NCBIfam" id="TIGR00217">
    <property type="entry name" value="malQ"/>
    <property type="match status" value="1"/>
</dbReference>
<dbReference type="NCBIfam" id="NF011080">
    <property type="entry name" value="PRK14508.1-3"/>
    <property type="match status" value="1"/>
</dbReference>
<dbReference type="PANTHER" id="PTHR32438">
    <property type="entry name" value="4-ALPHA-GLUCANOTRANSFERASE DPE1, CHLOROPLASTIC/AMYLOPLASTIC"/>
    <property type="match status" value="1"/>
</dbReference>
<dbReference type="PANTHER" id="PTHR32438:SF5">
    <property type="entry name" value="4-ALPHA-GLUCANOTRANSFERASE DPE1, CHLOROPLASTIC_AMYLOPLASTIC"/>
    <property type="match status" value="1"/>
</dbReference>
<dbReference type="Pfam" id="PF02446">
    <property type="entry name" value="Glyco_hydro_77"/>
    <property type="match status" value="1"/>
</dbReference>
<dbReference type="SUPFAM" id="SSF51445">
    <property type="entry name" value="(Trans)glycosidases"/>
    <property type="match status" value="1"/>
</dbReference>
<evidence type="ECO:0000250" key="1"/>
<evidence type="ECO:0000305" key="2"/>
<evidence type="ECO:0007829" key="3">
    <source>
        <dbReference type="PDB" id="1TZ7"/>
    </source>
</evidence>
<accession>O66937</accession>
<sequence>MRLAGILLHVTSLPSPYGIGDLGKEAYRFLDFLKECGFSLWQVLPLNPTSLEAGNSPYSSNSLFAGNYVLIDPEELLEEDLIKERDLKRFPLGEALYEVVYEYKKELLEKAFKNFRRFELLEDFLKEHSYWLRDYALYMAIKEEEGKEWYEWDEELKRREKEALKRVLNKLKGRFYFHVFVQFVFFKQWEKLRRYARERGISIVGDLPMYPSYSSADVWTNPELFKLDGDLKPLFVAGVPPDFFSKTGQLWGNPVYNWEEHEKEGFRWWIRRVHHNLKLFDFLRLDHFRGFEAYWEVPYGEETAVNGRWVKAPGKTLFKKLLSYFPKNPFIAEDLGFITDEVRYLRETFKIPGSRVIEFAFYDKESEHLPHNVEENNVYYTSTHDLPPIRGWFENLGEESRKRLFEYLGREIKEEKVNEELIRLVLISRAKFAIIQMQDLLNLGNEARMNYPGRPFGNWRWRIKEDYTQKKEFIKKLLGIYGREV</sequence>
<feature type="chain" id="PRO_0000170119" description="4-alpha-glucanotransferase">
    <location>
        <begin position="1"/>
        <end position="485"/>
    </location>
</feature>
<feature type="strand" evidence="3">
    <location>
        <begin position="3"/>
        <end position="7"/>
    </location>
</feature>
<feature type="helix" evidence="3">
    <location>
        <begin position="10"/>
        <end position="12"/>
    </location>
</feature>
<feature type="strand" evidence="3">
    <location>
        <begin position="16"/>
        <end position="19"/>
    </location>
</feature>
<feature type="helix" evidence="3">
    <location>
        <begin position="24"/>
        <end position="36"/>
    </location>
</feature>
<feature type="strand" evidence="3">
    <location>
        <begin position="40"/>
        <end position="42"/>
    </location>
</feature>
<feature type="helix" evidence="3">
    <location>
        <begin position="51"/>
        <end position="53"/>
    </location>
</feature>
<feature type="strand" evidence="3">
    <location>
        <begin position="63"/>
        <end position="65"/>
    </location>
</feature>
<feature type="helix" evidence="3">
    <location>
        <begin position="68"/>
        <end position="70"/>
    </location>
</feature>
<feature type="helix" evidence="3">
    <location>
        <begin position="74"/>
        <end position="78"/>
    </location>
</feature>
<feature type="helix" evidence="3">
    <location>
        <begin position="84"/>
        <end position="86"/>
    </location>
</feature>
<feature type="helix" evidence="3">
    <location>
        <begin position="97"/>
        <end position="113"/>
    </location>
</feature>
<feature type="helix" evidence="3">
    <location>
        <begin position="118"/>
        <end position="127"/>
    </location>
</feature>
<feature type="helix" evidence="3">
    <location>
        <begin position="129"/>
        <end position="145"/>
    </location>
</feature>
<feature type="helix" evidence="3">
    <location>
        <begin position="149"/>
        <end position="151"/>
    </location>
</feature>
<feature type="helix" evidence="3">
    <location>
        <begin position="154"/>
        <end position="157"/>
    </location>
</feature>
<feature type="helix" evidence="3">
    <location>
        <begin position="161"/>
        <end position="170"/>
    </location>
</feature>
<feature type="helix" evidence="3">
    <location>
        <begin position="172"/>
        <end position="198"/>
    </location>
</feature>
<feature type="strand" evidence="3">
    <location>
        <begin position="202"/>
        <end position="207"/>
    </location>
</feature>
<feature type="strand" evidence="3">
    <location>
        <begin position="213"/>
        <end position="215"/>
    </location>
</feature>
<feature type="helix" evidence="3">
    <location>
        <begin position="216"/>
        <end position="220"/>
    </location>
</feature>
<feature type="helix" evidence="3">
    <location>
        <begin position="222"/>
        <end position="224"/>
    </location>
</feature>
<feature type="strand" evidence="3">
    <location>
        <begin position="233"/>
        <end position="239"/>
    </location>
</feature>
<feature type="strand" evidence="3">
    <location>
        <begin position="243"/>
        <end position="247"/>
    </location>
</feature>
<feature type="strand" evidence="3">
    <location>
        <begin position="249"/>
        <end position="254"/>
    </location>
</feature>
<feature type="helix" evidence="3">
    <location>
        <begin position="258"/>
        <end position="263"/>
    </location>
</feature>
<feature type="turn" evidence="3">
    <location>
        <begin position="264"/>
        <end position="266"/>
    </location>
</feature>
<feature type="helix" evidence="3">
    <location>
        <begin position="267"/>
        <end position="277"/>
    </location>
</feature>
<feature type="strand" evidence="3">
    <location>
        <begin position="281"/>
        <end position="285"/>
    </location>
</feature>
<feature type="helix" evidence="3">
    <location>
        <begin position="288"/>
        <end position="291"/>
    </location>
</feature>
<feature type="strand" evidence="3">
    <location>
        <begin position="293"/>
        <end position="298"/>
    </location>
</feature>
<feature type="strand" evidence="3">
    <location>
        <begin position="302"/>
        <end position="304"/>
    </location>
</feature>
<feature type="strand" evidence="3">
    <location>
        <begin position="308"/>
        <end position="311"/>
    </location>
</feature>
<feature type="helix" evidence="3">
    <location>
        <begin position="314"/>
        <end position="324"/>
    </location>
</feature>
<feature type="strand" evidence="3">
    <location>
        <begin position="330"/>
        <end position="332"/>
    </location>
</feature>
<feature type="helix" evidence="3">
    <location>
        <begin position="340"/>
        <end position="348"/>
    </location>
</feature>
<feature type="strand" evidence="3">
    <location>
        <begin position="353"/>
        <end position="356"/>
    </location>
</feature>
<feature type="helix" evidence="3">
    <location>
        <begin position="357"/>
        <end position="359"/>
    </location>
</feature>
<feature type="helix" evidence="3">
    <location>
        <begin position="370"/>
        <end position="372"/>
    </location>
</feature>
<feature type="strand" evidence="3">
    <location>
        <begin position="375"/>
        <end position="381"/>
    </location>
</feature>
<feature type="helix" evidence="3">
    <location>
        <begin position="389"/>
        <end position="394"/>
    </location>
</feature>
<feature type="helix" evidence="3">
    <location>
        <begin position="398"/>
        <end position="408"/>
    </location>
</feature>
<feature type="helix" evidence="3">
    <location>
        <begin position="414"/>
        <end position="416"/>
    </location>
</feature>
<feature type="helix" evidence="3">
    <location>
        <begin position="417"/>
        <end position="427"/>
    </location>
</feature>
<feature type="strand" evidence="3">
    <location>
        <begin position="431"/>
        <end position="436"/>
    </location>
</feature>
<feature type="helix" evidence="3">
    <location>
        <begin position="437"/>
        <end position="440"/>
    </location>
</feature>
<feature type="helix" evidence="3">
    <location>
        <begin position="445"/>
        <end position="447"/>
    </location>
</feature>
<feature type="helix" evidence="3">
    <location>
        <begin position="467"/>
        <end position="470"/>
    </location>
</feature>
<feature type="helix" evidence="3">
    <location>
        <begin position="471"/>
        <end position="480"/>
    </location>
</feature>
<organism>
    <name type="scientific">Aquifex aeolicus (strain VF5)</name>
    <dbReference type="NCBI Taxonomy" id="224324"/>
    <lineage>
        <taxon>Bacteria</taxon>
        <taxon>Pseudomonadati</taxon>
        <taxon>Aquificota</taxon>
        <taxon>Aquificia</taxon>
        <taxon>Aquificales</taxon>
        <taxon>Aquificaceae</taxon>
        <taxon>Aquifex</taxon>
    </lineage>
</organism>